<sequence length="396" mass="45245">MATYVRNLNAAINSRNGLQLAHLLAVNPDTNPTAPQTNALAVAAGITNQVWQPVVEAHVLACNDSSTPLERLQAHQAFLSELNRVSEKEDVWILPILYAASTHLRGIGRRALKEIQDKEAKNEILTQLESSSRVVNRTLTLCLNDRHPSLQKSKKWGTYFFVGELCKLYFLLRKRNMSKSVIKVVESMSRDLPPLASYPRSHTCTYSYYRGVLSLMDDDVEQAQNWLTQALNQCFYKSTDNQELILLHLIPVQFLMTNQVPSKAVWEKFPRLHTVYHQMLTALLRGDVLSFDKAVTQRRSLFVKKYLYLAVEKMRVFVFEKLFYRVFLAKDKATRITIDDYQAAAKLVGVDVSPDFLEATVSNMIYHDRLKGYISRERHTVVLRAEGAFPKLDHAA</sequence>
<reference key="1">
    <citation type="journal article" date="2004" name="Nature">
        <title>Genome evolution in yeasts.</title>
        <authorList>
            <person name="Dujon B."/>
            <person name="Sherman D."/>
            <person name="Fischer G."/>
            <person name="Durrens P."/>
            <person name="Casaregola S."/>
            <person name="Lafontaine I."/>
            <person name="de Montigny J."/>
            <person name="Marck C."/>
            <person name="Neuveglise C."/>
            <person name="Talla E."/>
            <person name="Goffard N."/>
            <person name="Frangeul L."/>
            <person name="Aigle M."/>
            <person name="Anthouard V."/>
            <person name="Babour A."/>
            <person name="Barbe V."/>
            <person name="Barnay S."/>
            <person name="Blanchin S."/>
            <person name="Beckerich J.-M."/>
            <person name="Beyne E."/>
            <person name="Bleykasten C."/>
            <person name="Boisrame A."/>
            <person name="Boyer J."/>
            <person name="Cattolico L."/>
            <person name="Confanioleri F."/>
            <person name="de Daruvar A."/>
            <person name="Despons L."/>
            <person name="Fabre E."/>
            <person name="Fairhead C."/>
            <person name="Ferry-Dumazet H."/>
            <person name="Groppi A."/>
            <person name="Hantraye F."/>
            <person name="Hennequin C."/>
            <person name="Jauniaux N."/>
            <person name="Joyet P."/>
            <person name="Kachouri R."/>
            <person name="Kerrest A."/>
            <person name="Koszul R."/>
            <person name="Lemaire M."/>
            <person name="Lesur I."/>
            <person name="Ma L."/>
            <person name="Muller H."/>
            <person name="Nicaud J.-M."/>
            <person name="Nikolski M."/>
            <person name="Oztas S."/>
            <person name="Ozier-Kalogeropoulos O."/>
            <person name="Pellenz S."/>
            <person name="Potier S."/>
            <person name="Richard G.-F."/>
            <person name="Straub M.-L."/>
            <person name="Suleau A."/>
            <person name="Swennen D."/>
            <person name="Tekaia F."/>
            <person name="Wesolowski-Louvel M."/>
            <person name="Westhof E."/>
            <person name="Wirth B."/>
            <person name="Zeniou-Meyer M."/>
            <person name="Zivanovic Y."/>
            <person name="Bolotin-Fukuhara M."/>
            <person name="Thierry A."/>
            <person name="Bouchier C."/>
            <person name="Caudron B."/>
            <person name="Scarpelli C."/>
            <person name="Gaillardin C."/>
            <person name="Weissenbach J."/>
            <person name="Wincker P."/>
            <person name="Souciet J.-L."/>
        </authorList>
    </citation>
    <scope>NUCLEOTIDE SEQUENCE [LARGE SCALE GENOMIC DNA]</scope>
    <source>
        <strain>CLIB 122 / E 150</strain>
    </source>
</reference>
<dbReference type="EMBL" id="CR382132">
    <property type="protein sequence ID" value="CAG78257.1"/>
    <property type="molecule type" value="Genomic_DNA"/>
</dbReference>
<dbReference type="RefSeq" id="XP_505448.1">
    <property type="nucleotide sequence ID" value="XM_505448.1"/>
</dbReference>
<dbReference type="SMR" id="Q6C1L4"/>
<dbReference type="FunCoup" id="Q6C1L4">
    <property type="interactions" value="923"/>
</dbReference>
<dbReference type="STRING" id="284591.Q6C1L4"/>
<dbReference type="EnsemblFungi" id="CAG78257">
    <property type="protein sequence ID" value="CAG78257"/>
    <property type="gene ID" value="YALI0_F15213g"/>
</dbReference>
<dbReference type="KEGG" id="yli:2908928"/>
<dbReference type="VEuPathDB" id="FungiDB:YALI0_F15213g"/>
<dbReference type="HOGENOM" id="CLU_031567_2_1_1"/>
<dbReference type="InParanoid" id="Q6C1L4"/>
<dbReference type="OMA" id="INRMFTL"/>
<dbReference type="OrthoDB" id="64098at4891"/>
<dbReference type="Proteomes" id="UP000001300">
    <property type="component" value="Chromosome F"/>
</dbReference>
<dbReference type="GO" id="GO:0003690">
    <property type="term" value="F:double-stranded DNA binding"/>
    <property type="evidence" value="ECO:0000318"/>
    <property type="project" value="GO_Central"/>
</dbReference>
<dbReference type="GO" id="GO:0003723">
    <property type="term" value="F:RNA binding"/>
    <property type="evidence" value="ECO:0000318"/>
    <property type="project" value="GO_Central"/>
</dbReference>
<dbReference type="Gene3D" id="1.10.10.10">
    <property type="entry name" value="Winged helix-like DNA-binding domain superfamily/Winged helix DNA-binding domain"/>
    <property type="match status" value="1"/>
</dbReference>
<dbReference type="InterPro" id="IPR045114">
    <property type="entry name" value="Csn12-like"/>
</dbReference>
<dbReference type="InterPro" id="IPR000717">
    <property type="entry name" value="PCI_dom"/>
</dbReference>
<dbReference type="InterPro" id="IPR036388">
    <property type="entry name" value="WH-like_DNA-bd_sf"/>
</dbReference>
<dbReference type="PANTHER" id="PTHR12732:SF0">
    <property type="entry name" value="PCI DOMAIN-CONTAINING PROTEIN 2"/>
    <property type="match status" value="1"/>
</dbReference>
<dbReference type="PANTHER" id="PTHR12732">
    <property type="entry name" value="UNCHARACTERIZED PROTEASOME COMPONENT REGION PCI-CONTAINING"/>
    <property type="match status" value="1"/>
</dbReference>
<dbReference type="Pfam" id="PF01399">
    <property type="entry name" value="PCI"/>
    <property type="match status" value="1"/>
</dbReference>
<dbReference type="SMART" id="SM00753">
    <property type="entry name" value="PAM"/>
    <property type="match status" value="1"/>
</dbReference>
<dbReference type="PROSITE" id="PS50250">
    <property type="entry name" value="PCI"/>
    <property type="match status" value="1"/>
</dbReference>
<gene>
    <name type="primary">CSN12</name>
    <name type="ordered locus">YALI0F15213g</name>
</gene>
<comment type="similarity">
    <text evidence="2">Belongs to the CSN12 family.</text>
</comment>
<proteinExistence type="inferred from homology"/>
<evidence type="ECO:0000255" key="1">
    <source>
        <dbReference type="PROSITE-ProRule" id="PRU01185"/>
    </source>
</evidence>
<evidence type="ECO:0000305" key="2"/>
<name>CSN12_YARLI</name>
<keyword id="KW-1185">Reference proteome</keyword>
<organism>
    <name type="scientific">Yarrowia lipolytica (strain CLIB 122 / E 150)</name>
    <name type="common">Yeast</name>
    <name type="synonym">Candida lipolytica</name>
    <dbReference type="NCBI Taxonomy" id="284591"/>
    <lineage>
        <taxon>Eukaryota</taxon>
        <taxon>Fungi</taxon>
        <taxon>Dikarya</taxon>
        <taxon>Ascomycota</taxon>
        <taxon>Saccharomycotina</taxon>
        <taxon>Dipodascomycetes</taxon>
        <taxon>Dipodascales</taxon>
        <taxon>Dipodascales incertae sedis</taxon>
        <taxon>Yarrowia</taxon>
    </lineage>
</organism>
<feature type="chain" id="PRO_0000121046" description="Protein CSN12 homolog">
    <location>
        <begin position="1"/>
        <end position="396"/>
    </location>
</feature>
<feature type="domain" description="PCI" evidence="1">
    <location>
        <begin position="204"/>
        <end position="388"/>
    </location>
</feature>
<protein>
    <recommendedName>
        <fullName>Protein CSN12 homolog</fullName>
    </recommendedName>
</protein>
<accession>Q6C1L4</accession>